<sequence>MKIVISKPDKNKIRQKRHRRVRGKLSGTADRPRLNVFRSNTGIYAQVIDDVAGVTLASASTLDKDVSKGTKTEQAVVVGKLVAERAVAKGISEVVFDRGGYLYHGRVKALADAARENGLKF</sequence>
<keyword id="KW-0687">Ribonucleoprotein</keyword>
<keyword id="KW-0689">Ribosomal protein</keyword>
<keyword id="KW-0694">RNA-binding</keyword>
<keyword id="KW-0699">rRNA-binding</keyword>
<feature type="chain" id="PRO_0000251381" description="Large ribosomal subunit protein uL18">
    <location>
        <begin position="1"/>
        <end position="121"/>
    </location>
</feature>
<feature type="region of interest" description="Disordered" evidence="2">
    <location>
        <begin position="1"/>
        <end position="25"/>
    </location>
</feature>
<feature type="compositionally biased region" description="Basic residues" evidence="2">
    <location>
        <begin position="13"/>
        <end position="23"/>
    </location>
</feature>
<reference key="1">
    <citation type="journal article" date="2006" name="Proc. Natl. Acad. Sci. U.S.A.">
        <title>Molecular genetic anatomy of inter- and intraserotype variation in the human bacterial pathogen group A Streptococcus.</title>
        <authorList>
            <person name="Beres S.B."/>
            <person name="Richter E.W."/>
            <person name="Nagiec M.J."/>
            <person name="Sumby P."/>
            <person name="Porcella S.F."/>
            <person name="DeLeo F.R."/>
            <person name="Musser J.M."/>
        </authorList>
    </citation>
    <scope>NUCLEOTIDE SEQUENCE [LARGE SCALE GENOMIC DNA]</scope>
    <source>
        <strain>MGAS10750</strain>
    </source>
</reference>
<comment type="function">
    <text evidence="1">This is one of the proteins that bind and probably mediate the attachment of the 5S RNA into the large ribosomal subunit, where it forms part of the central protuberance.</text>
</comment>
<comment type="subunit">
    <text evidence="1">Part of the 50S ribosomal subunit; part of the 5S rRNA/L5/L18/L25 subcomplex. Contacts the 5S and 23S rRNAs.</text>
</comment>
<comment type="similarity">
    <text evidence="1">Belongs to the universal ribosomal protein uL18 family.</text>
</comment>
<gene>
    <name evidence="1" type="primary">rplR</name>
    <name type="ordered locus">MGAS10750_Spy0064</name>
</gene>
<organism>
    <name type="scientific">Streptococcus pyogenes serotype M4 (strain MGAS10750)</name>
    <dbReference type="NCBI Taxonomy" id="370554"/>
    <lineage>
        <taxon>Bacteria</taxon>
        <taxon>Bacillati</taxon>
        <taxon>Bacillota</taxon>
        <taxon>Bacilli</taxon>
        <taxon>Lactobacillales</taxon>
        <taxon>Streptococcaceae</taxon>
        <taxon>Streptococcus</taxon>
    </lineage>
</organism>
<name>RL18_STRPF</name>
<dbReference type="EMBL" id="CP000262">
    <property type="protein sequence ID" value="ABF37014.1"/>
    <property type="molecule type" value="Genomic_DNA"/>
</dbReference>
<dbReference type="SMR" id="Q1J8Z7"/>
<dbReference type="KEGG" id="spi:MGAS10750_Spy0064"/>
<dbReference type="HOGENOM" id="CLU_098841_0_1_9"/>
<dbReference type="Proteomes" id="UP000002434">
    <property type="component" value="Chromosome"/>
</dbReference>
<dbReference type="GO" id="GO:0022625">
    <property type="term" value="C:cytosolic large ribosomal subunit"/>
    <property type="evidence" value="ECO:0007669"/>
    <property type="project" value="TreeGrafter"/>
</dbReference>
<dbReference type="GO" id="GO:0008097">
    <property type="term" value="F:5S rRNA binding"/>
    <property type="evidence" value="ECO:0007669"/>
    <property type="project" value="TreeGrafter"/>
</dbReference>
<dbReference type="GO" id="GO:0003735">
    <property type="term" value="F:structural constituent of ribosome"/>
    <property type="evidence" value="ECO:0007669"/>
    <property type="project" value="InterPro"/>
</dbReference>
<dbReference type="GO" id="GO:0006412">
    <property type="term" value="P:translation"/>
    <property type="evidence" value="ECO:0007669"/>
    <property type="project" value="UniProtKB-UniRule"/>
</dbReference>
<dbReference type="CDD" id="cd00432">
    <property type="entry name" value="Ribosomal_L18_L5e"/>
    <property type="match status" value="1"/>
</dbReference>
<dbReference type="FunFam" id="3.30.420.100:FF:000001">
    <property type="entry name" value="50S ribosomal protein L18"/>
    <property type="match status" value="1"/>
</dbReference>
<dbReference type="Gene3D" id="3.30.420.100">
    <property type="match status" value="1"/>
</dbReference>
<dbReference type="HAMAP" id="MF_01337_B">
    <property type="entry name" value="Ribosomal_uL18_B"/>
    <property type="match status" value="1"/>
</dbReference>
<dbReference type="InterPro" id="IPR004389">
    <property type="entry name" value="Ribosomal_uL18_bac-type"/>
</dbReference>
<dbReference type="InterPro" id="IPR005484">
    <property type="entry name" value="Ribosomal_uL18_bac/euk"/>
</dbReference>
<dbReference type="NCBIfam" id="TIGR00060">
    <property type="entry name" value="L18_bact"/>
    <property type="match status" value="1"/>
</dbReference>
<dbReference type="PANTHER" id="PTHR12899">
    <property type="entry name" value="39S RIBOSOMAL PROTEIN L18, MITOCHONDRIAL"/>
    <property type="match status" value="1"/>
</dbReference>
<dbReference type="PANTHER" id="PTHR12899:SF3">
    <property type="entry name" value="LARGE RIBOSOMAL SUBUNIT PROTEIN UL18M"/>
    <property type="match status" value="1"/>
</dbReference>
<dbReference type="Pfam" id="PF00861">
    <property type="entry name" value="Ribosomal_L18p"/>
    <property type="match status" value="1"/>
</dbReference>
<dbReference type="SUPFAM" id="SSF53137">
    <property type="entry name" value="Translational machinery components"/>
    <property type="match status" value="1"/>
</dbReference>
<proteinExistence type="inferred from homology"/>
<accession>Q1J8Z7</accession>
<protein>
    <recommendedName>
        <fullName evidence="1">Large ribosomal subunit protein uL18</fullName>
    </recommendedName>
    <alternativeName>
        <fullName evidence="3">50S ribosomal protein L18</fullName>
    </alternativeName>
</protein>
<evidence type="ECO:0000255" key="1">
    <source>
        <dbReference type="HAMAP-Rule" id="MF_01337"/>
    </source>
</evidence>
<evidence type="ECO:0000256" key="2">
    <source>
        <dbReference type="SAM" id="MobiDB-lite"/>
    </source>
</evidence>
<evidence type="ECO:0000305" key="3"/>